<sequence length="385" mass="42184">MAALSGVRWLTRALVSAGNPGAWRGLSTSAAAHAASRSQAEDVRVEGSFPVTMLPGDGVGPELMHAVKEVFKAAAVPVEFQEHHLSEVQNMASEEKLEQVLSSMKENKVAIIGKIHTPMEYKGELASYDMRLRRKLDLFANVVHVKSLPGYMTRHNNLDLVIIREQTEGEYSSLEHESARGVIECLKIVTRAKSQRIAKFAFDYATKKGRGKVTAVHKANIMKLGDGLFLQCCEEVAELYPKIKFETMIIDNCCMQLVQNPYQFDVLVMPNLYGNIIDNLAAGLVGGAGVVPGESYSAEYAVFETGARHPFAQAVGRNIANPTAMLLSASNMLRHLNLEYHSSMIADAVKKVIKVGKVRTRDMGGYSTTTDFIKSVIGHLQTKGS</sequence>
<protein>
    <recommendedName>
        <fullName>Isocitrate dehydrogenase [NAD] subunit beta, mitochondrial</fullName>
    </recommendedName>
    <alternativeName>
        <fullName>Isocitric dehydrogenase subunit beta</fullName>
    </alternativeName>
    <alternativeName>
        <fullName>NAD(+)-specific ICDH subunit beta</fullName>
    </alternativeName>
</protein>
<comment type="function">
    <text evidence="5">Plays a structural role to facilitate the assembly and ensure the full activity of the enzyme catalyzing the decarboxylation of isocitrate (ICT) into alpha-ketoglutarate. The heterodimer composed of the alpha (IDH3A) and beta (IDH3B) subunits and the heterodimer composed of the alpha (IDH3A) and gamma (IDH3G) subunits, have considerable basal activity but the full activity of the heterotetramer (containing two subunits of IDH3A, one of IDH3B and one of IDH3G) requires the assembly and cooperative function of both heterodimers.</text>
</comment>
<comment type="activity regulation">
    <text evidence="4 5">The heterotetramer and the heterodimer composed of IDH3A and IDH3G subunits can be allosterically activated by citrate (CIT) or/and ADP, and the two activators can act independently or synergistically. The heterodimer composed of IDH3A and IDH3B subunits cannot be allosterically regulated and the allosteric regulation of the heterotetramer is through the IDH3G subunit and not the IDH3B subunit. The IDH3G subunit contains the allosteric site which consists of a CIT-binding site and an ADP-binding site, and the binding of CIT and ADP causes conformational changes at the allosteric site which are transmitted to the active site in the catalytic subunit (IDH3A) through a cascade of conformational changes at the heterodimer interface, leading to stabilization of the isocitrate-binding at the active site and thus activation of the enzyme. ATP can activate the heterotetramer and the heterodimer composed of IDH3A and IDH3G subunits at low concentrations but inhibits their activities at high concentrations, whereas ATP exhibits only inhibitory effect on the heterodimer composed of IDH3A and IDH3B subunits.</text>
</comment>
<comment type="subunit">
    <text evidence="5">Heterooligomer of subunits alpha (IDH3A), beta (IDH3B), and gamma (IDH3G) in the apparent ratio of 2:1:1. The heterodimer containing one IDH3A and one IDH3B subunit and the heterodimer containing one IDH3A and one IDH3G subunit assemble into a heterotetramer (which contains two subunits of IDH3A, one of IDH3B and one of IDH3G) and further into the heterooctamer.</text>
</comment>
<comment type="interaction">
    <interactant intactId="EBI-725399">
        <id>O43837-2</id>
    </interactant>
    <interactant intactId="EBI-25820746">
        <id>PRO_0000014436</id>
        <label>IDH3A</label>
        <dbReference type="UniProtKB" id="P50213"/>
    </interactant>
    <organismsDiffer>false</organismsDiffer>
    <experiments>2</experiments>
</comment>
<comment type="subcellular location">
    <subcellularLocation>
        <location>Mitochondrion</location>
    </subcellularLocation>
</comment>
<comment type="alternative products">
    <event type="alternative splicing"/>
    <isoform>
        <id>O43837-1</id>
        <name>B</name>
        <sequence type="displayed"/>
    </isoform>
    <isoform>
        <id>O43837-2</id>
        <name>A</name>
        <sequence type="described" ref="VSP_002462"/>
    </isoform>
    <isoform>
        <id>O43837-3</id>
        <name>C</name>
        <sequence type="described" ref="VSP_041335"/>
    </isoform>
</comment>
<comment type="disease" evidence="3">
    <disease id="DI-00996">
        <name>Retinitis pigmentosa 46</name>
        <acronym>RP46</acronym>
        <description>A retinal dystrophy belonging to the group of pigmentary retinopathies. Retinitis pigmentosa is characterized by retinal pigment deposits visible on fundus examination and primary loss of rod photoreceptor cells followed by secondary loss of cone photoreceptors. Patients typically have night vision blindness and loss of midperipheral visual field. As their condition progresses, they lose their far peripheral visual field and eventually central vision as well.</description>
        <dbReference type="MIM" id="612572"/>
    </disease>
    <text>The disease is caused by variants affecting the gene represented in this entry.</text>
</comment>
<comment type="similarity">
    <text evidence="8">Belongs to the isocitrate and isopropylmalate dehydrogenases family.</text>
</comment>
<evidence type="ECO:0000250" key="1"/>
<evidence type="ECO:0000269" key="2">
    <source>
    </source>
</evidence>
<evidence type="ECO:0000269" key="3">
    <source>
    </source>
</evidence>
<evidence type="ECO:0000269" key="4">
    <source>
    </source>
</evidence>
<evidence type="ECO:0000269" key="5">
    <source>
    </source>
</evidence>
<evidence type="ECO:0000303" key="6">
    <source>
    </source>
</evidence>
<evidence type="ECO:0000303" key="7">
    <source>
    </source>
</evidence>
<evidence type="ECO:0000305" key="8"/>
<evidence type="ECO:0007744" key="9">
    <source>
    </source>
</evidence>
<evidence type="ECO:0007829" key="10">
    <source>
        <dbReference type="PDB" id="6KDE"/>
    </source>
</evidence>
<evidence type="ECO:0007829" key="11">
    <source>
        <dbReference type="PDB" id="6KDY"/>
    </source>
</evidence>
<evidence type="ECO:0007829" key="12">
    <source>
        <dbReference type="PDB" id="8GRD"/>
    </source>
</evidence>
<evidence type="ECO:0007829" key="13">
    <source>
        <dbReference type="PDB" id="8GRU"/>
    </source>
</evidence>
<reference key="1">
    <citation type="journal article" date="1999" name="J. Biol. Chem.">
        <title>Identification and functional characterization of a novel, tissue-specific NAD+-dependent isocitrate dehydrogenase beta subunit isoform.</title>
        <authorList>
            <person name="Kim Y.-O."/>
            <person name="Koh H.-J."/>
            <person name="Kim S.-H."/>
            <person name="Jo S.-H."/>
            <person name="Huh J.-W."/>
            <person name="Jeong K.-S."/>
            <person name="Lee I.J."/>
            <person name="Song B.J."/>
            <person name="Huh T.-L."/>
        </authorList>
    </citation>
    <scope>NUCLEOTIDE SEQUENCE [MRNA] (ISOFORMS A AND B)</scope>
    <scope>VARIANT VAL-3</scope>
    <scope>ALTERNATIVE SPLICING</scope>
    <source>
        <tissue>Heart</tissue>
    </source>
</reference>
<reference key="2">
    <citation type="journal article" date="2004" name="Nat. Genet.">
        <title>Complete sequencing and characterization of 21,243 full-length human cDNAs.</title>
        <authorList>
            <person name="Ota T."/>
            <person name="Suzuki Y."/>
            <person name="Nishikawa T."/>
            <person name="Otsuki T."/>
            <person name="Sugiyama T."/>
            <person name="Irie R."/>
            <person name="Wakamatsu A."/>
            <person name="Hayashi K."/>
            <person name="Sato H."/>
            <person name="Nagai K."/>
            <person name="Kimura K."/>
            <person name="Makita H."/>
            <person name="Sekine M."/>
            <person name="Obayashi M."/>
            <person name="Nishi T."/>
            <person name="Shibahara T."/>
            <person name="Tanaka T."/>
            <person name="Ishii S."/>
            <person name="Yamamoto J."/>
            <person name="Saito K."/>
            <person name="Kawai Y."/>
            <person name="Isono Y."/>
            <person name="Nakamura Y."/>
            <person name="Nagahari K."/>
            <person name="Murakami K."/>
            <person name="Yasuda T."/>
            <person name="Iwayanagi T."/>
            <person name="Wagatsuma M."/>
            <person name="Shiratori A."/>
            <person name="Sudo H."/>
            <person name="Hosoiri T."/>
            <person name="Kaku Y."/>
            <person name="Kodaira H."/>
            <person name="Kondo H."/>
            <person name="Sugawara M."/>
            <person name="Takahashi M."/>
            <person name="Kanda K."/>
            <person name="Yokoi T."/>
            <person name="Furuya T."/>
            <person name="Kikkawa E."/>
            <person name="Omura Y."/>
            <person name="Abe K."/>
            <person name="Kamihara K."/>
            <person name="Katsuta N."/>
            <person name="Sato K."/>
            <person name="Tanikawa M."/>
            <person name="Yamazaki M."/>
            <person name="Ninomiya K."/>
            <person name="Ishibashi T."/>
            <person name="Yamashita H."/>
            <person name="Murakawa K."/>
            <person name="Fujimori K."/>
            <person name="Tanai H."/>
            <person name="Kimata M."/>
            <person name="Watanabe M."/>
            <person name="Hiraoka S."/>
            <person name="Chiba Y."/>
            <person name="Ishida S."/>
            <person name="Ono Y."/>
            <person name="Takiguchi S."/>
            <person name="Watanabe S."/>
            <person name="Yosida M."/>
            <person name="Hotuta T."/>
            <person name="Kusano J."/>
            <person name="Kanehori K."/>
            <person name="Takahashi-Fujii A."/>
            <person name="Hara H."/>
            <person name="Tanase T.-O."/>
            <person name="Nomura Y."/>
            <person name="Togiya S."/>
            <person name="Komai F."/>
            <person name="Hara R."/>
            <person name="Takeuchi K."/>
            <person name="Arita M."/>
            <person name="Imose N."/>
            <person name="Musashino K."/>
            <person name="Yuuki H."/>
            <person name="Oshima A."/>
            <person name="Sasaki N."/>
            <person name="Aotsuka S."/>
            <person name="Yoshikawa Y."/>
            <person name="Matsunawa H."/>
            <person name="Ichihara T."/>
            <person name="Shiohata N."/>
            <person name="Sano S."/>
            <person name="Moriya S."/>
            <person name="Momiyama H."/>
            <person name="Satoh N."/>
            <person name="Takami S."/>
            <person name="Terashima Y."/>
            <person name="Suzuki O."/>
            <person name="Nakagawa S."/>
            <person name="Senoh A."/>
            <person name="Mizoguchi H."/>
            <person name="Goto Y."/>
            <person name="Shimizu F."/>
            <person name="Wakebe H."/>
            <person name="Hishigaki H."/>
            <person name="Watanabe T."/>
            <person name="Sugiyama A."/>
            <person name="Takemoto M."/>
            <person name="Kawakami B."/>
            <person name="Yamazaki M."/>
            <person name="Watanabe K."/>
            <person name="Kumagai A."/>
            <person name="Itakura S."/>
            <person name="Fukuzumi Y."/>
            <person name="Fujimori Y."/>
            <person name="Komiyama M."/>
            <person name="Tashiro H."/>
            <person name="Tanigami A."/>
            <person name="Fujiwara T."/>
            <person name="Ono T."/>
            <person name="Yamada K."/>
            <person name="Fujii Y."/>
            <person name="Ozaki K."/>
            <person name="Hirao M."/>
            <person name="Ohmori Y."/>
            <person name="Kawabata A."/>
            <person name="Hikiji T."/>
            <person name="Kobatake N."/>
            <person name="Inagaki H."/>
            <person name="Ikema Y."/>
            <person name="Okamoto S."/>
            <person name="Okitani R."/>
            <person name="Kawakami T."/>
            <person name="Noguchi S."/>
            <person name="Itoh T."/>
            <person name="Shigeta K."/>
            <person name="Senba T."/>
            <person name="Matsumura K."/>
            <person name="Nakajima Y."/>
            <person name="Mizuno T."/>
            <person name="Morinaga M."/>
            <person name="Sasaki M."/>
            <person name="Togashi T."/>
            <person name="Oyama M."/>
            <person name="Hata H."/>
            <person name="Watanabe M."/>
            <person name="Komatsu T."/>
            <person name="Mizushima-Sugano J."/>
            <person name="Satoh T."/>
            <person name="Shirai Y."/>
            <person name="Takahashi Y."/>
            <person name="Nakagawa K."/>
            <person name="Okumura K."/>
            <person name="Nagase T."/>
            <person name="Nomura N."/>
            <person name="Kikuchi H."/>
            <person name="Masuho Y."/>
            <person name="Yamashita R."/>
            <person name="Nakai K."/>
            <person name="Yada T."/>
            <person name="Nakamura Y."/>
            <person name="Ohara O."/>
            <person name="Isogai T."/>
            <person name="Sugano S."/>
        </authorList>
    </citation>
    <scope>NUCLEOTIDE SEQUENCE [LARGE SCALE MRNA] (ISOFORMS B AND C)</scope>
    <source>
        <tissue>Placenta</tissue>
        <tissue>Synovium</tissue>
    </source>
</reference>
<reference key="3">
    <citation type="journal article" date="2001" name="Nature">
        <title>The DNA sequence and comparative analysis of human chromosome 20.</title>
        <authorList>
            <person name="Deloukas P."/>
            <person name="Matthews L.H."/>
            <person name="Ashurst J.L."/>
            <person name="Burton J."/>
            <person name="Gilbert J.G.R."/>
            <person name="Jones M."/>
            <person name="Stavrides G."/>
            <person name="Almeida J.P."/>
            <person name="Babbage A.K."/>
            <person name="Bagguley C.L."/>
            <person name="Bailey J."/>
            <person name="Barlow K.F."/>
            <person name="Bates K.N."/>
            <person name="Beard L.M."/>
            <person name="Beare D.M."/>
            <person name="Beasley O.P."/>
            <person name="Bird C.P."/>
            <person name="Blakey S.E."/>
            <person name="Bridgeman A.M."/>
            <person name="Brown A.J."/>
            <person name="Buck D."/>
            <person name="Burrill W.D."/>
            <person name="Butler A.P."/>
            <person name="Carder C."/>
            <person name="Carter N.P."/>
            <person name="Chapman J.C."/>
            <person name="Clamp M."/>
            <person name="Clark G."/>
            <person name="Clark L.N."/>
            <person name="Clark S.Y."/>
            <person name="Clee C.M."/>
            <person name="Clegg S."/>
            <person name="Cobley V.E."/>
            <person name="Collier R.E."/>
            <person name="Connor R.E."/>
            <person name="Corby N.R."/>
            <person name="Coulson A."/>
            <person name="Coville G.J."/>
            <person name="Deadman R."/>
            <person name="Dhami P.D."/>
            <person name="Dunn M."/>
            <person name="Ellington A.G."/>
            <person name="Frankland J.A."/>
            <person name="Fraser A."/>
            <person name="French L."/>
            <person name="Garner P."/>
            <person name="Grafham D.V."/>
            <person name="Griffiths C."/>
            <person name="Griffiths M.N.D."/>
            <person name="Gwilliam R."/>
            <person name="Hall R.E."/>
            <person name="Hammond S."/>
            <person name="Harley J.L."/>
            <person name="Heath P.D."/>
            <person name="Ho S."/>
            <person name="Holden J.L."/>
            <person name="Howden P.J."/>
            <person name="Huckle E."/>
            <person name="Hunt A.R."/>
            <person name="Hunt S.E."/>
            <person name="Jekosch K."/>
            <person name="Johnson C.M."/>
            <person name="Johnson D."/>
            <person name="Kay M.P."/>
            <person name="Kimberley A.M."/>
            <person name="King A."/>
            <person name="Knights A."/>
            <person name="Laird G.K."/>
            <person name="Lawlor S."/>
            <person name="Lehvaeslaiho M.H."/>
            <person name="Leversha M.A."/>
            <person name="Lloyd C."/>
            <person name="Lloyd D.M."/>
            <person name="Lovell J.D."/>
            <person name="Marsh V.L."/>
            <person name="Martin S.L."/>
            <person name="McConnachie L.J."/>
            <person name="McLay K."/>
            <person name="McMurray A.A."/>
            <person name="Milne S.A."/>
            <person name="Mistry D."/>
            <person name="Moore M.J.F."/>
            <person name="Mullikin J.C."/>
            <person name="Nickerson T."/>
            <person name="Oliver K."/>
            <person name="Parker A."/>
            <person name="Patel R."/>
            <person name="Pearce T.A.V."/>
            <person name="Peck A.I."/>
            <person name="Phillimore B.J.C.T."/>
            <person name="Prathalingam S.R."/>
            <person name="Plumb R.W."/>
            <person name="Ramsay H."/>
            <person name="Rice C.M."/>
            <person name="Ross M.T."/>
            <person name="Scott C.E."/>
            <person name="Sehra H.K."/>
            <person name="Shownkeen R."/>
            <person name="Sims S."/>
            <person name="Skuce C.D."/>
            <person name="Smith M.L."/>
            <person name="Soderlund C."/>
            <person name="Steward C.A."/>
            <person name="Sulston J.E."/>
            <person name="Swann R.M."/>
            <person name="Sycamore N."/>
            <person name="Taylor R."/>
            <person name="Tee L."/>
            <person name="Thomas D.W."/>
            <person name="Thorpe A."/>
            <person name="Tracey A."/>
            <person name="Tromans A.C."/>
            <person name="Vaudin M."/>
            <person name="Wall M."/>
            <person name="Wallis J.M."/>
            <person name="Whitehead S.L."/>
            <person name="Whittaker P."/>
            <person name="Willey D.L."/>
            <person name="Williams L."/>
            <person name="Williams S.A."/>
            <person name="Wilming L."/>
            <person name="Wray P.W."/>
            <person name="Hubbard T."/>
            <person name="Durbin R.M."/>
            <person name="Bentley D.R."/>
            <person name="Beck S."/>
            <person name="Rogers J."/>
        </authorList>
    </citation>
    <scope>NUCLEOTIDE SEQUENCE [LARGE SCALE GENOMIC DNA]</scope>
</reference>
<reference key="4">
    <citation type="submission" date="2005-09" db="EMBL/GenBank/DDBJ databases">
        <authorList>
            <person name="Mural R.J."/>
            <person name="Istrail S."/>
            <person name="Sutton G.G."/>
            <person name="Florea L."/>
            <person name="Halpern A.L."/>
            <person name="Mobarry C.M."/>
            <person name="Lippert R."/>
            <person name="Walenz B."/>
            <person name="Shatkay H."/>
            <person name="Dew I."/>
            <person name="Miller J.R."/>
            <person name="Flanigan M.J."/>
            <person name="Edwards N.J."/>
            <person name="Bolanos R."/>
            <person name="Fasulo D."/>
            <person name="Halldorsson B.V."/>
            <person name="Hannenhalli S."/>
            <person name="Turner R."/>
            <person name="Yooseph S."/>
            <person name="Lu F."/>
            <person name="Nusskern D.R."/>
            <person name="Shue B.C."/>
            <person name="Zheng X.H."/>
            <person name="Zhong F."/>
            <person name="Delcher A.L."/>
            <person name="Huson D.H."/>
            <person name="Kravitz S.A."/>
            <person name="Mouchard L."/>
            <person name="Reinert K."/>
            <person name="Remington K.A."/>
            <person name="Clark A.G."/>
            <person name="Waterman M.S."/>
            <person name="Eichler E.E."/>
            <person name="Adams M.D."/>
            <person name="Hunkapiller M.W."/>
            <person name="Myers E.W."/>
            <person name="Venter J.C."/>
        </authorList>
    </citation>
    <scope>NUCLEOTIDE SEQUENCE [LARGE SCALE GENOMIC DNA]</scope>
</reference>
<reference key="5">
    <citation type="journal article" date="2004" name="Genome Res.">
        <title>The status, quality, and expansion of the NIH full-length cDNA project: the Mammalian Gene Collection (MGC).</title>
        <authorList>
            <consortium name="The MGC Project Team"/>
        </authorList>
    </citation>
    <scope>NUCLEOTIDE SEQUENCE [LARGE SCALE MRNA] (ISOFORM B)</scope>
    <source>
        <tissue>Lung</tissue>
    </source>
</reference>
<reference key="6">
    <citation type="journal article" date="2007" name="BMC Genomics">
        <title>The full-ORF clone resource of the German cDNA consortium.</title>
        <authorList>
            <person name="Bechtel S."/>
            <person name="Rosenfelder H."/>
            <person name="Duda A."/>
            <person name="Schmidt C.P."/>
            <person name="Ernst U."/>
            <person name="Wellenreuther R."/>
            <person name="Mehrle A."/>
            <person name="Schuster C."/>
            <person name="Bahr A."/>
            <person name="Bloecker H."/>
            <person name="Heubner D."/>
            <person name="Hoerlein A."/>
            <person name="Michel G."/>
            <person name="Wedler H."/>
            <person name="Koehrer K."/>
            <person name="Ottenwaelder B."/>
            <person name="Poustka A."/>
            <person name="Wiemann S."/>
            <person name="Schupp I."/>
        </authorList>
    </citation>
    <scope>NUCLEOTIDE SEQUENCE [LARGE SCALE MRNA] OF 127-385 (ISOFORM B)</scope>
    <source>
        <tissue>Uterus</tissue>
    </source>
</reference>
<reference key="7">
    <citation type="journal article" date="2009" name="Science">
        <title>Lysine acetylation targets protein complexes and co-regulates major cellular functions.</title>
        <authorList>
            <person name="Choudhary C."/>
            <person name="Kumar C."/>
            <person name="Gnad F."/>
            <person name="Nielsen M.L."/>
            <person name="Rehman M."/>
            <person name="Walther T.C."/>
            <person name="Olsen J.V."/>
            <person name="Mann M."/>
        </authorList>
    </citation>
    <scope>ACETYLATION [LARGE SCALE ANALYSIS] AT LYS-199</scope>
    <scope>IDENTIFICATION BY MASS SPECTROMETRY [LARGE SCALE ANALYSIS]</scope>
</reference>
<reference key="8">
    <citation type="journal article" date="2011" name="BMC Syst. Biol.">
        <title>Initial characterization of the human central proteome.</title>
        <authorList>
            <person name="Burkard T.R."/>
            <person name="Planyavsky M."/>
            <person name="Kaupe I."/>
            <person name="Breitwieser F.P."/>
            <person name="Buerckstuemmer T."/>
            <person name="Bennett K.L."/>
            <person name="Superti-Furga G."/>
            <person name="Colinge J."/>
        </authorList>
    </citation>
    <scope>IDENTIFICATION BY MASS SPECTROMETRY [LARGE SCALE ANALYSIS]</scope>
</reference>
<reference key="9">
    <citation type="journal article" date="2015" name="Proteomics">
        <title>N-terminome analysis of the human mitochondrial proteome.</title>
        <authorList>
            <person name="Vaca Jacome A.S."/>
            <person name="Rabilloud T."/>
            <person name="Schaeffer-Reiss C."/>
            <person name="Rompais M."/>
            <person name="Ayoub D."/>
            <person name="Lane L."/>
            <person name="Bairoch A."/>
            <person name="Van Dorsselaer A."/>
            <person name="Carapito C."/>
        </authorList>
    </citation>
    <scope>IDENTIFICATION BY MASS SPECTROMETRY [LARGE SCALE ANALYSIS]</scope>
</reference>
<reference key="10">
    <citation type="journal article" date="2017" name="Sci. Rep.">
        <title>Molecular mechanism of the allosteric regulation of the alphagamma heterodimer of human NAD-dependent isocitrate dehydrogenase.</title>
        <authorList>
            <person name="Ma T."/>
            <person name="Peng Y."/>
            <person name="Huang W."/>
            <person name="Ding J."/>
        </authorList>
    </citation>
    <scope>SUBUNIT</scope>
    <scope>ACTIVITY REGULATION</scope>
</reference>
<reference key="11">
    <citation type="journal article" date="2017" name="Sci. Rep.">
        <title>The beta and gamma subunits play distinct functional roles in the alpha2betagamma heterotetramer of human NAD-dependent isocitrate dehydrogenase.</title>
        <authorList>
            <person name="Ma T."/>
            <person name="Peng Y."/>
            <person name="Huang W."/>
            <person name="Liu Y."/>
            <person name="Ding J."/>
        </authorList>
    </citation>
    <scope>FUNCTION</scope>
    <scope>SUBUNIT</scope>
    <scope>ACTIVITY REGULATION</scope>
</reference>
<reference key="12">
    <citation type="journal article" date="2008" name="Nat. Genet.">
        <title>Insights from retinitis pigmentosa into the roles of isocitrate dehydrogenases in the Krebs cycle.</title>
        <authorList>
            <person name="Hartong D.T."/>
            <person name="Dange M."/>
            <person name="McGee T.L."/>
            <person name="Berson E.L."/>
            <person name="Dryja T.P."/>
            <person name="Colman R.F."/>
        </authorList>
    </citation>
    <scope>VARIANT RP46 PRO-132</scope>
</reference>
<proteinExistence type="evidence at protein level"/>
<gene>
    <name type="primary">IDH3B</name>
</gene>
<keyword id="KW-0002">3D-structure</keyword>
<keyword id="KW-0007">Acetylation</keyword>
<keyword id="KW-0025">Alternative splicing</keyword>
<keyword id="KW-0225">Disease variant</keyword>
<keyword id="KW-0496">Mitochondrion</keyword>
<keyword id="KW-1267">Proteomics identification</keyword>
<keyword id="KW-1185">Reference proteome</keyword>
<keyword id="KW-0682">Retinitis pigmentosa</keyword>
<keyword id="KW-0809">Transit peptide</keyword>
<keyword id="KW-0816">Tricarboxylic acid cycle</keyword>
<organism>
    <name type="scientific">Homo sapiens</name>
    <name type="common">Human</name>
    <dbReference type="NCBI Taxonomy" id="9606"/>
    <lineage>
        <taxon>Eukaryota</taxon>
        <taxon>Metazoa</taxon>
        <taxon>Chordata</taxon>
        <taxon>Craniata</taxon>
        <taxon>Vertebrata</taxon>
        <taxon>Euteleostomi</taxon>
        <taxon>Mammalia</taxon>
        <taxon>Eutheria</taxon>
        <taxon>Euarchontoglires</taxon>
        <taxon>Primates</taxon>
        <taxon>Haplorrhini</taxon>
        <taxon>Catarrhini</taxon>
        <taxon>Hominidae</taxon>
        <taxon>Homo</taxon>
    </lineage>
</organism>
<feature type="transit peptide" description="Mitochondrion" evidence="1">
    <location>
        <begin position="1"/>
        <end position="34"/>
    </location>
</feature>
<feature type="chain" id="PRO_0000014444" description="Isocitrate dehydrogenase [NAD] subunit beta, mitochondrial">
    <location>
        <begin position="35"/>
        <end position="385"/>
    </location>
</feature>
<feature type="modified residue" description="N6-acetyllysine" evidence="9">
    <location>
        <position position="199"/>
    </location>
</feature>
<feature type="splice variant" id="VSP_041335" description="In isoform C." evidence="7">
    <original>MAALSGVRWLTRALVSAGNPGAWRGLSTSAAAHAASRSQAEDVRVEGSFPVTMLPGDGVGPELMHAVKEVFKAAAVPVEFQEHHLSEVQNMASEEKLEQVLSSMKENKVAIIGKIHTPMEYKGELASYDMRLRRKLDLFANVVHVKSLPGYMTRHNNLDLVIIREQTEGEYSSLEHE</original>
    <variation>MKMGERWSSLFPFPVSPSCCFLLTQ</variation>
    <location>
        <begin position="1"/>
        <end position="177"/>
    </location>
</feature>
<feature type="splice variant" id="VSP_002462" description="In isoform A." evidence="6">
    <original>RDMGGYSTTTDFIKSVIGHLQTKGS</original>
    <variation>SDMGGYATCHDFTEAVIAALPHP</variation>
    <location>
        <begin position="361"/>
        <end position="385"/>
    </location>
</feature>
<feature type="sequence variant" id="VAR_022660" description="In dbSNP:rs3178817." evidence="2">
    <original>A</original>
    <variation>V</variation>
    <location>
        <position position="3"/>
    </location>
</feature>
<feature type="sequence variant" id="VAR_054851" description="In RP46; dbSNP:rs137853020." evidence="3">
    <original>L</original>
    <variation>P</variation>
    <location>
        <position position="132"/>
    </location>
</feature>
<feature type="sequence variant" id="VAR_049781" description="In dbSNP:rs11542741.">
    <original>Q</original>
    <variation>H</variation>
    <location>
        <position position="166"/>
    </location>
</feature>
<feature type="sequence variant" id="VAR_056005" description="In dbSNP:rs8296.">
    <original>T</original>
    <variation>A</variation>
    <location>
        <position position="360"/>
    </location>
</feature>
<feature type="sequence conflict" description="In Ref. 6; CAB43266." evidence="8" ref="6">
    <original>SYDM</original>
    <variation>RTLV</variation>
    <location>
        <begin position="127"/>
        <end position="130"/>
    </location>
</feature>
<feature type="sequence conflict" description="In Ref. 2; BAA91971." evidence="8" ref="2">
    <original>I</original>
    <variation>V</variation>
    <location>
        <position position="250"/>
    </location>
</feature>
<feature type="sequence conflict" description="In Ref. 1; AAD09340." evidence="8" ref="1">
    <original>S</original>
    <variation>SNL</variation>
    <location>
        <position position="385"/>
    </location>
</feature>
<feature type="strand" evidence="12">
    <location>
        <begin position="50"/>
        <end position="54"/>
    </location>
</feature>
<feature type="helix" evidence="12">
    <location>
        <begin position="60"/>
        <end position="74"/>
    </location>
</feature>
<feature type="strand" evidence="12">
    <location>
        <begin position="79"/>
        <end position="82"/>
    </location>
</feature>
<feature type="turn" evidence="11">
    <location>
        <begin position="87"/>
        <end position="90"/>
    </location>
</feature>
<feature type="helix" evidence="12">
    <location>
        <begin position="93"/>
        <end position="107"/>
    </location>
</feature>
<feature type="strand" evidence="12">
    <location>
        <begin position="109"/>
        <end position="112"/>
    </location>
</feature>
<feature type="strand" evidence="11">
    <location>
        <begin position="119"/>
        <end position="121"/>
    </location>
</feature>
<feature type="helix" evidence="11">
    <location>
        <begin position="124"/>
        <end position="126"/>
    </location>
</feature>
<feature type="helix" evidence="12">
    <location>
        <begin position="128"/>
        <end position="135"/>
    </location>
</feature>
<feature type="strand" evidence="12">
    <location>
        <begin position="140"/>
        <end position="146"/>
    </location>
</feature>
<feature type="strand" evidence="10">
    <location>
        <begin position="149"/>
        <end position="151"/>
    </location>
</feature>
<feature type="strand" evidence="12">
    <location>
        <begin position="159"/>
        <end position="165"/>
    </location>
</feature>
<feature type="strand" evidence="12">
    <location>
        <begin position="167"/>
        <end position="169"/>
    </location>
</feature>
<feature type="helix" evidence="12">
    <location>
        <begin position="170"/>
        <end position="172"/>
    </location>
</feature>
<feature type="strand" evidence="12">
    <location>
        <begin position="175"/>
        <end position="179"/>
    </location>
</feature>
<feature type="strand" evidence="12">
    <location>
        <begin position="182"/>
        <end position="190"/>
    </location>
</feature>
<feature type="helix" evidence="12">
    <location>
        <begin position="191"/>
        <end position="207"/>
    </location>
</feature>
<feature type="strand" evidence="12">
    <location>
        <begin position="212"/>
        <end position="217"/>
    </location>
</feature>
<feature type="turn" evidence="12">
    <location>
        <begin position="219"/>
        <end position="221"/>
    </location>
</feature>
<feature type="helix" evidence="12">
    <location>
        <begin position="225"/>
        <end position="238"/>
    </location>
</feature>
<feature type="strand" evidence="12">
    <location>
        <begin position="243"/>
        <end position="249"/>
    </location>
</feature>
<feature type="helix" evidence="12">
    <location>
        <begin position="250"/>
        <end position="259"/>
    </location>
</feature>
<feature type="helix" evidence="12">
    <location>
        <begin position="261"/>
        <end position="263"/>
    </location>
</feature>
<feature type="strand" evidence="12">
    <location>
        <begin position="265"/>
        <end position="269"/>
    </location>
</feature>
<feature type="helix" evidence="12">
    <location>
        <begin position="271"/>
        <end position="284"/>
    </location>
</feature>
<feature type="turn" evidence="12">
    <location>
        <begin position="288"/>
        <end position="290"/>
    </location>
</feature>
<feature type="strand" evidence="12">
    <location>
        <begin position="292"/>
        <end position="296"/>
    </location>
</feature>
<feature type="strand" evidence="12">
    <location>
        <begin position="301"/>
        <end position="307"/>
    </location>
</feature>
<feature type="helix" evidence="12">
    <location>
        <begin position="312"/>
        <end position="314"/>
    </location>
</feature>
<feature type="turn" evidence="13">
    <location>
        <begin position="315"/>
        <end position="318"/>
    </location>
</feature>
<feature type="helix" evidence="12">
    <location>
        <begin position="323"/>
        <end position="335"/>
    </location>
</feature>
<feature type="helix" evidence="12">
    <location>
        <begin position="339"/>
        <end position="355"/>
    </location>
</feature>
<feature type="helix" evidence="12">
    <location>
        <begin position="361"/>
        <end position="363"/>
    </location>
</feature>
<feature type="helix" evidence="12">
    <location>
        <begin position="369"/>
        <end position="374"/>
    </location>
</feature>
<dbReference type="EMBL" id="U49283">
    <property type="protein sequence ID" value="AAB94295.1"/>
    <property type="molecule type" value="mRNA"/>
</dbReference>
<dbReference type="EMBL" id="AF023265">
    <property type="protein sequence ID" value="AAD09339.1"/>
    <property type="molecule type" value="mRNA"/>
</dbReference>
<dbReference type="EMBL" id="AF023266">
    <property type="protein sequence ID" value="AAD09340.1"/>
    <property type="molecule type" value="mRNA"/>
</dbReference>
<dbReference type="EMBL" id="AK001905">
    <property type="protein sequence ID" value="BAA91971.1"/>
    <property type="molecule type" value="mRNA"/>
</dbReference>
<dbReference type="EMBL" id="AK315641">
    <property type="protein sequence ID" value="BAG38008.1"/>
    <property type="molecule type" value="mRNA"/>
</dbReference>
<dbReference type="EMBL" id="AL049712">
    <property type="status" value="NOT_ANNOTATED_CDS"/>
    <property type="molecule type" value="Genomic_DNA"/>
</dbReference>
<dbReference type="EMBL" id="CH471133">
    <property type="protein sequence ID" value="EAX10579.1"/>
    <property type="molecule type" value="Genomic_DNA"/>
</dbReference>
<dbReference type="EMBL" id="CH471133">
    <property type="protein sequence ID" value="EAX10580.1"/>
    <property type="molecule type" value="Genomic_DNA"/>
</dbReference>
<dbReference type="EMBL" id="CH471133">
    <property type="protein sequence ID" value="EAX10582.1"/>
    <property type="molecule type" value="Genomic_DNA"/>
</dbReference>
<dbReference type="EMBL" id="CH471133">
    <property type="protein sequence ID" value="EAX10583.1"/>
    <property type="molecule type" value="Genomic_DNA"/>
</dbReference>
<dbReference type="EMBL" id="BC001960">
    <property type="protein sequence ID" value="AAH01960.1"/>
    <property type="molecule type" value="mRNA"/>
</dbReference>
<dbReference type="EMBL" id="AL050094">
    <property type="protein sequence ID" value="CAB43266.1"/>
    <property type="molecule type" value="mRNA"/>
</dbReference>
<dbReference type="CCDS" id="CCDS13031.1">
    <molecule id="O43837-2"/>
</dbReference>
<dbReference type="CCDS" id="CCDS13032.1">
    <molecule id="O43837-1"/>
</dbReference>
<dbReference type="PIR" id="T08743">
    <property type="entry name" value="T08743"/>
</dbReference>
<dbReference type="PIR" id="T13147">
    <property type="entry name" value="T13147"/>
</dbReference>
<dbReference type="RefSeq" id="NP_001317692.1">
    <property type="nucleotide sequence ID" value="NM_001330763.1"/>
</dbReference>
<dbReference type="RefSeq" id="NP_008830.2">
    <molecule id="O43837-1"/>
    <property type="nucleotide sequence ID" value="NM_006899.4"/>
</dbReference>
<dbReference type="RefSeq" id="NP_777280.1">
    <molecule id="O43837-2"/>
    <property type="nucleotide sequence ID" value="NM_174855.4"/>
</dbReference>
<dbReference type="PDB" id="6KDE">
    <property type="method" value="X-ray"/>
    <property type="resolution" value="3.00 A"/>
    <property type="chains" value="B/D=35-374"/>
</dbReference>
<dbReference type="PDB" id="6KDF">
    <property type="method" value="X-ray"/>
    <property type="resolution" value="3.05 A"/>
    <property type="chains" value="C/D/F/H/J/L/N/P=35-374"/>
</dbReference>
<dbReference type="PDB" id="6KDY">
    <property type="method" value="X-ray"/>
    <property type="resolution" value="3.02 A"/>
    <property type="chains" value="B/D/F/H=35-374"/>
</dbReference>
<dbReference type="PDB" id="6KE3">
    <property type="method" value="X-ray"/>
    <property type="resolution" value="3.31 A"/>
    <property type="chains" value="B/D/F/H=35-374"/>
</dbReference>
<dbReference type="PDB" id="7CE3">
    <property type="method" value="X-ray"/>
    <property type="resolution" value="3.47 A"/>
    <property type="chains" value="D=35-374"/>
</dbReference>
<dbReference type="PDB" id="8GRB">
    <property type="method" value="X-ray"/>
    <property type="resolution" value="2.85 A"/>
    <property type="chains" value="C/D/F/H/J/L/N/P=35-374"/>
</dbReference>
<dbReference type="PDB" id="8GRD">
    <property type="method" value="X-ray"/>
    <property type="resolution" value="2.70 A"/>
    <property type="chains" value="B=35-374"/>
</dbReference>
<dbReference type="PDB" id="8GRU">
    <property type="method" value="X-ray"/>
    <property type="resolution" value="2.85 A"/>
    <property type="chains" value="B/D=35-374"/>
</dbReference>
<dbReference type="PDB" id="8GS5">
    <property type="method" value="X-ray"/>
    <property type="resolution" value="4.49 A"/>
    <property type="chains" value="B/F/J/N=35-374"/>
</dbReference>
<dbReference type="PDBsum" id="6KDE"/>
<dbReference type="PDBsum" id="6KDF"/>
<dbReference type="PDBsum" id="6KDY"/>
<dbReference type="PDBsum" id="6KE3"/>
<dbReference type="PDBsum" id="7CE3"/>
<dbReference type="PDBsum" id="8GRB"/>
<dbReference type="PDBsum" id="8GRD"/>
<dbReference type="PDBsum" id="8GRU"/>
<dbReference type="PDBsum" id="8GS5"/>
<dbReference type="SMR" id="O43837"/>
<dbReference type="BioGRID" id="109646">
    <property type="interactions" value="101"/>
</dbReference>
<dbReference type="ComplexPortal" id="CPX-553">
    <property type="entry name" value="Mitochondrial isocitrate dehydrogenase complex (NAD+)"/>
</dbReference>
<dbReference type="CORUM" id="O43837"/>
<dbReference type="FunCoup" id="O43837">
    <property type="interactions" value="2511"/>
</dbReference>
<dbReference type="IntAct" id="O43837">
    <property type="interactions" value="50"/>
</dbReference>
<dbReference type="MINT" id="O43837"/>
<dbReference type="STRING" id="9606.ENSP00000482773"/>
<dbReference type="DrugBank" id="DB13874">
    <property type="generic name" value="Enasidenib"/>
</dbReference>
<dbReference type="DrugBank" id="DB00157">
    <property type="generic name" value="NADH"/>
</dbReference>
<dbReference type="DrugBank" id="DB17097">
    <property type="generic name" value="Vorasidenib"/>
</dbReference>
<dbReference type="GlyGen" id="O43837">
    <property type="glycosylation" value="1 site, 1 O-linked glycan (1 site)"/>
</dbReference>
<dbReference type="iPTMnet" id="O43837"/>
<dbReference type="MetOSite" id="O43837"/>
<dbReference type="PhosphoSitePlus" id="O43837"/>
<dbReference type="SwissPalm" id="O43837"/>
<dbReference type="BioMuta" id="IDH3B"/>
<dbReference type="CPTAC" id="CPTAC-2740"/>
<dbReference type="jPOST" id="O43837"/>
<dbReference type="MassIVE" id="O43837"/>
<dbReference type="PaxDb" id="9606-ENSP00000370223"/>
<dbReference type="PeptideAtlas" id="O43837"/>
<dbReference type="ProteomicsDB" id="49197">
    <molecule id="O43837-1"/>
</dbReference>
<dbReference type="ProteomicsDB" id="49198">
    <molecule id="O43837-2"/>
</dbReference>
<dbReference type="ProteomicsDB" id="49199">
    <molecule id="O43837-3"/>
</dbReference>
<dbReference type="Pumba" id="O43837"/>
<dbReference type="Antibodypedia" id="23248">
    <property type="antibodies" value="259 antibodies from 31 providers"/>
</dbReference>
<dbReference type="DNASU" id="3420"/>
<dbReference type="Ensembl" id="ENST00000380843.9">
    <molecule id="O43837-1"/>
    <property type="protein sequence ID" value="ENSP00000370223.4"/>
    <property type="gene ID" value="ENSG00000101365.22"/>
</dbReference>
<dbReference type="Ensembl" id="ENST00000380851.10">
    <molecule id="O43837-2"/>
    <property type="protein sequence ID" value="ENSP00000370232.5"/>
    <property type="gene ID" value="ENSG00000101365.22"/>
</dbReference>
<dbReference type="GeneID" id="3420"/>
<dbReference type="KEGG" id="hsa:3420"/>
<dbReference type="MANE-Select" id="ENST00000380843.9">
    <property type="protein sequence ID" value="ENSP00000370223.4"/>
    <property type="RefSeq nucleotide sequence ID" value="NM_006899.5"/>
    <property type="RefSeq protein sequence ID" value="NP_008830.2"/>
</dbReference>
<dbReference type="UCSC" id="uc002wgp.4">
    <molecule id="O43837-1"/>
    <property type="organism name" value="human"/>
</dbReference>
<dbReference type="AGR" id="HGNC:5385"/>
<dbReference type="CTD" id="3420"/>
<dbReference type="DisGeNET" id="3420"/>
<dbReference type="GeneCards" id="IDH3B"/>
<dbReference type="GeneReviews" id="IDH3B"/>
<dbReference type="HGNC" id="HGNC:5385">
    <property type="gene designation" value="IDH3B"/>
</dbReference>
<dbReference type="HPA" id="ENSG00000101365">
    <property type="expression patterns" value="Low tissue specificity"/>
</dbReference>
<dbReference type="MalaCards" id="IDH3B"/>
<dbReference type="MIM" id="604526">
    <property type="type" value="gene"/>
</dbReference>
<dbReference type="MIM" id="612572">
    <property type="type" value="phenotype"/>
</dbReference>
<dbReference type="neXtProt" id="NX_O43837"/>
<dbReference type="OpenTargets" id="ENSG00000101365"/>
<dbReference type="Orphanet" id="791">
    <property type="disease" value="Retinitis pigmentosa"/>
</dbReference>
<dbReference type="PharmGKB" id="PA29633"/>
<dbReference type="VEuPathDB" id="HostDB:ENSG00000101365"/>
<dbReference type="eggNOG" id="KOG0784">
    <property type="taxonomic scope" value="Eukaryota"/>
</dbReference>
<dbReference type="GeneTree" id="ENSGT00950000182989"/>
<dbReference type="HOGENOM" id="CLU_031953_0_1_1"/>
<dbReference type="InParanoid" id="O43837"/>
<dbReference type="OMA" id="TCAHKAN"/>
<dbReference type="OrthoDB" id="10261637at2759"/>
<dbReference type="PAN-GO" id="O43837">
    <property type="GO annotations" value="3 GO annotations based on evolutionary models"/>
</dbReference>
<dbReference type="PhylomeDB" id="O43837"/>
<dbReference type="TreeFam" id="TF315033"/>
<dbReference type="BioCyc" id="MetaCyc:ENSG00000101365-MONOMER"/>
<dbReference type="BRENDA" id="1.1.1.41">
    <property type="organism ID" value="2681"/>
</dbReference>
<dbReference type="PathwayCommons" id="O43837"/>
<dbReference type="Reactome" id="R-HSA-71403">
    <property type="pathway name" value="Citric acid cycle (TCA cycle)"/>
</dbReference>
<dbReference type="SABIO-RK" id="O43837"/>
<dbReference type="SignaLink" id="O43837"/>
<dbReference type="SIGNOR" id="O43837"/>
<dbReference type="BioGRID-ORCS" id="3420">
    <property type="hits" value="24 hits in 1164 CRISPR screens"/>
</dbReference>
<dbReference type="CD-CODE" id="91857CE7">
    <property type="entry name" value="Nucleolus"/>
</dbReference>
<dbReference type="ChiTaRS" id="IDH3B">
    <property type="organism name" value="human"/>
</dbReference>
<dbReference type="GeneWiki" id="IDH3B"/>
<dbReference type="GenomeRNAi" id="3420"/>
<dbReference type="Pharos" id="O43837">
    <property type="development level" value="Tbio"/>
</dbReference>
<dbReference type="PRO" id="PR:O43837"/>
<dbReference type="Proteomes" id="UP000005640">
    <property type="component" value="Chromosome 20"/>
</dbReference>
<dbReference type="RNAct" id="O43837">
    <property type="molecule type" value="protein"/>
</dbReference>
<dbReference type="Bgee" id="ENSG00000101365">
    <property type="expression patterns" value="Expressed in apex of heart and 208 other cell types or tissues"/>
</dbReference>
<dbReference type="ExpressionAtlas" id="O43837">
    <property type="expression patterns" value="baseline and differential"/>
</dbReference>
<dbReference type="GO" id="GO:0045242">
    <property type="term" value="C:isocitrate dehydrogenase complex (NAD+)"/>
    <property type="evidence" value="ECO:0000314"/>
    <property type="project" value="FlyBase"/>
</dbReference>
<dbReference type="GO" id="GO:0005759">
    <property type="term" value="C:mitochondrial matrix"/>
    <property type="evidence" value="ECO:0000304"/>
    <property type="project" value="Reactome"/>
</dbReference>
<dbReference type="GO" id="GO:0005739">
    <property type="term" value="C:mitochondrion"/>
    <property type="evidence" value="ECO:0000314"/>
    <property type="project" value="HPA"/>
</dbReference>
<dbReference type="GO" id="GO:0005634">
    <property type="term" value="C:nucleus"/>
    <property type="evidence" value="ECO:0007005"/>
    <property type="project" value="UniProtKB"/>
</dbReference>
<dbReference type="GO" id="GO:0009055">
    <property type="term" value="F:electron transfer activity"/>
    <property type="evidence" value="ECO:0000304"/>
    <property type="project" value="UniProtKB"/>
</dbReference>
<dbReference type="GO" id="GO:0004449">
    <property type="term" value="F:isocitrate dehydrogenase (NAD+) activity"/>
    <property type="evidence" value="ECO:0000304"/>
    <property type="project" value="ProtInc"/>
</dbReference>
<dbReference type="GO" id="GO:0000287">
    <property type="term" value="F:magnesium ion binding"/>
    <property type="evidence" value="ECO:0007669"/>
    <property type="project" value="InterPro"/>
</dbReference>
<dbReference type="GO" id="GO:0051287">
    <property type="term" value="F:NAD binding"/>
    <property type="evidence" value="ECO:0007669"/>
    <property type="project" value="InterPro"/>
</dbReference>
<dbReference type="GO" id="GO:0006102">
    <property type="term" value="P:isocitrate metabolic process"/>
    <property type="evidence" value="ECO:0000318"/>
    <property type="project" value="GO_Central"/>
</dbReference>
<dbReference type="GO" id="GO:0006099">
    <property type="term" value="P:tricarboxylic acid cycle"/>
    <property type="evidence" value="ECO:0000314"/>
    <property type="project" value="ComplexPortal"/>
</dbReference>
<dbReference type="FunFam" id="3.40.718.10:FF:000001">
    <property type="entry name" value="Isocitrate dehydrogenase [NAD] subunit, mitochondrial"/>
    <property type="match status" value="1"/>
</dbReference>
<dbReference type="Gene3D" id="3.40.718.10">
    <property type="entry name" value="Isopropylmalate Dehydrogenase"/>
    <property type="match status" value="1"/>
</dbReference>
<dbReference type="InterPro" id="IPR019818">
    <property type="entry name" value="IsoCit/isopropylmalate_DH_CS"/>
</dbReference>
<dbReference type="InterPro" id="IPR004434">
    <property type="entry name" value="Isocitrate_DH_NAD"/>
</dbReference>
<dbReference type="InterPro" id="IPR024084">
    <property type="entry name" value="IsoPropMal-DH-like_dom"/>
</dbReference>
<dbReference type="NCBIfam" id="TIGR00175">
    <property type="entry name" value="mito_nad_idh"/>
    <property type="match status" value="1"/>
</dbReference>
<dbReference type="PANTHER" id="PTHR11835">
    <property type="entry name" value="DECARBOXYLATING DEHYDROGENASES-ISOCITRATE, ISOPROPYLMALATE, TARTRATE"/>
    <property type="match status" value="1"/>
</dbReference>
<dbReference type="PANTHER" id="PTHR11835:SF42">
    <property type="entry name" value="ISOCITRATE DEHYDROGENASE [NAD] SUBUNIT BETA, MITOCHONDRIAL"/>
    <property type="match status" value="1"/>
</dbReference>
<dbReference type="Pfam" id="PF00180">
    <property type="entry name" value="Iso_dh"/>
    <property type="match status" value="1"/>
</dbReference>
<dbReference type="SMART" id="SM01329">
    <property type="entry name" value="Iso_dh"/>
    <property type="match status" value="1"/>
</dbReference>
<dbReference type="SUPFAM" id="SSF53659">
    <property type="entry name" value="Isocitrate/Isopropylmalate dehydrogenase-like"/>
    <property type="match status" value="1"/>
</dbReference>
<dbReference type="PROSITE" id="PS00470">
    <property type="entry name" value="IDH_IMDH"/>
    <property type="match status" value="1"/>
</dbReference>
<name>IDH3B_HUMAN</name>
<accession>O43837</accession>
<accession>B2RDR1</accession>
<accession>D3DVX2</accession>
<accession>D3DVX3</accession>
<accession>O95106</accession>
<accession>Q5JXS8</accession>
<accession>Q9NQ06</accession>
<accession>Q9NQ07</accession>
<accession>Q9NUZ0</accession>
<accession>Q9UEX0</accession>
<accession>Q9UG99</accession>